<sequence length="209" mass="23870">MISPSKKRTILSSKNINQKPRAVVKGNELRSPSKRRSQIDTDYALRRSPIKTIQISKAAQFMLYEETAEERNIAVHRHNEIYNNNNSVSNENNPSQVKENLSPAKICPYERAFLREGGRIALKDLSVDEFKGYIQDPLTDETIPLTLPLGDKKISLPSFITPPRNSKISIFFTSKHQGQNPETKISRSTDDVSEKKVVRKLSFHVYEDE</sequence>
<keyword id="KW-0002">3D-structure</keyword>
<keyword id="KW-0131">Cell cycle</keyword>
<keyword id="KW-0132">Cell division</keyword>
<keyword id="KW-0498">Mitosis</keyword>
<keyword id="KW-0597">Phosphoprotein</keyword>
<keyword id="KW-1185">Reference proteome</keyword>
<keyword id="KW-0678">Repressor</keyword>
<keyword id="KW-0804">Transcription</keyword>
<keyword id="KW-0805">Transcription regulation</keyword>
<evidence type="ECO:0000256" key="1">
    <source>
        <dbReference type="SAM" id="MobiDB-lite"/>
    </source>
</evidence>
<evidence type="ECO:0000269" key="2">
    <source>
    </source>
</evidence>
<evidence type="ECO:0000269" key="3">
    <source>
    </source>
</evidence>
<evidence type="ECO:0007744" key="4">
    <source>
    </source>
</evidence>
<evidence type="ECO:0007744" key="5">
    <source>
    </source>
</evidence>
<evidence type="ECO:0007744" key="6">
    <source>
    </source>
</evidence>
<evidence type="ECO:0007829" key="7">
    <source>
        <dbReference type="PDB" id="4BH6"/>
    </source>
</evidence>
<proteinExistence type="evidence at protein level"/>
<dbReference type="EMBL" id="Z73623">
    <property type="protein sequence ID" value="CAA98002.1"/>
    <property type="molecule type" value="Genomic_DNA"/>
</dbReference>
<dbReference type="EMBL" id="AY558139">
    <property type="protein sequence ID" value="AAS56465.1"/>
    <property type="molecule type" value="Genomic_DNA"/>
</dbReference>
<dbReference type="EMBL" id="BK006949">
    <property type="protein sequence ID" value="DAA11169.1"/>
    <property type="molecule type" value="Genomic_DNA"/>
</dbReference>
<dbReference type="PIR" id="S65300">
    <property type="entry name" value="S65300"/>
</dbReference>
<dbReference type="RefSeq" id="NP_015056.1">
    <property type="nucleotide sequence ID" value="NM_001184081.1"/>
</dbReference>
<dbReference type="PDB" id="4BH6">
    <property type="method" value="X-ray"/>
    <property type="resolution" value="2.90 A"/>
    <property type="chains" value="I/J/K/L/M/N/O/P=59-128"/>
</dbReference>
<dbReference type="PDBsum" id="4BH6"/>
<dbReference type="SMR" id="Q08981"/>
<dbReference type="BioGRID" id="35946">
    <property type="interactions" value="79"/>
</dbReference>
<dbReference type="DIP" id="DIP-8871N"/>
<dbReference type="ELM" id="Q08981"/>
<dbReference type="FunCoup" id="Q08981">
    <property type="interactions" value="93"/>
</dbReference>
<dbReference type="IntAct" id="Q08981">
    <property type="interactions" value="6"/>
</dbReference>
<dbReference type="MINT" id="Q08981"/>
<dbReference type="STRING" id="4932.YPL267W"/>
<dbReference type="GlyGen" id="Q08981">
    <property type="glycosylation" value="1 site"/>
</dbReference>
<dbReference type="iPTMnet" id="Q08981"/>
<dbReference type="PaxDb" id="4932-YPL267W"/>
<dbReference type="PeptideAtlas" id="Q08981"/>
<dbReference type="EnsemblFungi" id="YPL267W_mRNA">
    <property type="protein sequence ID" value="YPL267W"/>
    <property type="gene ID" value="YPL267W"/>
</dbReference>
<dbReference type="GeneID" id="855861"/>
<dbReference type="KEGG" id="sce:YPL267W"/>
<dbReference type="AGR" id="SGD:S000006188"/>
<dbReference type="SGD" id="S000006188">
    <property type="gene designation" value="ACM1"/>
</dbReference>
<dbReference type="VEuPathDB" id="FungiDB:YPL267W"/>
<dbReference type="eggNOG" id="ENOG502S399">
    <property type="taxonomic scope" value="Eukaryota"/>
</dbReference>
<dbReference type="HOGENOM" id="CLU_111692_0_0_1"/>
<dbReference type="InParanoid" id="Q08981"/>
<dbReference type="OMA" id="SPAKICP"/>
<dbReference type="OrthoDB" id="4069241at2759"/>
<dbReference type="BioCyc" id="YEAST:G3O-34150-MONOMER"/>
<dbReference type="BioGRID-ORCS" id="855861">
    <property type="hits" value="0 hits in 10 CRISPR screens"/>
</dbReference>
<dbReference type="PRO" id="PR:Q08981"/>
<dbReference type="Proteomes" id="UP000002311">
    <property type="component" value="Chromosome XVI"/>
</dbReference>
<dbReference type="RNAct" id="Q08981">
    <property type="molecule type" value="protein"/>
</dbReference>
<dbReference type="GO" id="GO:0005737">
    <property type="term" value="C:cytoplasm"/>
    <property type="evidence" value="ECO:0000314"/>
    <property type="project" value="SGD"/>
</dbReference>
<dbReference type="GO" id="GO:0005634">
    <property type="term" value="C:nucleus"/>
    <property type="evidence" value="ECO:0000314"/>
    <property type="project" value="SGD"/>
</dbReference>
<dbReference type="GO" id="GO:0055105">
    <property type="term" value="F:ubiquitin-protein transferase inhibitor activity"/>
    <property type="evidence" value="ECO:0000314"/>
    <property type="project" value="SGD"/>
</dbReference>
<dbReference type="GO" id="GO:0051301">
    <property type="term" value="P:cell division"/>
    <property type="evidence" value="ECO:0007669"/>
    <property type="project" value="UniProtKB-KW"/>
</dbReference>
<dbReference type="GO" id="GO:0031397">
    <property type="term" value="P:negative regulation of protein ubiquitination"/>
    <property type="evidence" value="ECO:0000314"/>
    <property type="project" value="SGD"/>
</dbReference>
<dbReference type="CDD" id="cd22876">
    <property type="entry name" value="Acm1_CIR"/>
    <property type="match status" value="1"/>
</dbReference>
<dbReference type="Gene3D" id="6.10.250.2450">
    <property type="match status" value="1"/>
</dbReference>
<protein>
    <recommendedName>
        <fullName>APC/C-CDH1 modulator 1</fullName>
    </recommendedName>
</protein>
<comment type="function">
    <text evidence="3">Negative regulator of GDH1, the activator protein that regulates the ubiquitin ligase activity and substrate specificity of the anaphase promoting complex/cyclosome (APC/C), and which is required for exit from mitosis, cytokinesis and formation of prereplicative complexes in G1.</text>
</comment>
<comment type="subunit">
    <text evidence="3">Interacts with CDH1, BMH1 and BMH2.</text>
</comment>
<comment type="interaction">
    <interactant intactId="EBI-2345174">
        <id>Q08981</id>
    </interactant>
    <interactant intactId="EBI-23684">
        <id>P53197</id>
        <label>CDH1</label>
    </interactant>
    <organismsDiffer>false</organismsDiffer>
    <experiments>8</experiments>
</comment>
<comment type="induction">
    <text evidence="3">Expressed very quickly after G1 release, just prior to initiation of DNA replication.</text>
</comment>
<comment type="miscellaneous">
    <text evidence="2">Present with 688 molecules/cell in log phase SD medium.</text>
</comment>
<organism>
    <name type="scientific">Saccharomyces cerevisiae (strain ATCC 204508 / S288c)</name>
    <name type="common">Baker's yeast</name>
    <dbReference type="NCBI Taxonomy" id="559292"/>
    <lineage>
        <taxon>Eukaryota</taxon>
        <taxon>Fungi</taxon>
        <taxon>Dikarya</taxon>
        <taxon>Ascomycota</taxon>
        <taxon>Saccharomycotina</taxon>
        <taxon>Saccharomycetes</taxon>
        <taxon>Saccharomycetales</taxon>
        <taxon>Saccharomycetaceae</taxon>
        <taxon>Saccharomyces</taxon>
    </lineage>
</organism>
<gene>
    <name type="primary">ACM1</name>
    <name type="ordered locus">YPL267W</name>
</gene>
<feature type="chain" id="PRO_0000268174" description="APC/C-CDH1 modulator 1">
    <location>
        <begin position="1"/>
        <end position="209"/>
    </location>
</feature>
<feature type="region of interest" description="Disordered" evidence="1">
    <location>
        <begin position="1"/>
        <end position="38"/>
    </location>
</feature>
<feature type="modified residue" description="Phosphoserine" evidence="4">
    <location>
        <position position="48"/>
    </location>
</feature>
<feature type="modified residue" description="Phosphothreonine" evidence="4 5">
    <location>
        <position position="161"/>
    </location>
</feature>
<feature type="modified residue" description="Phosphoserine" evidence="4 5 6">
    <location>
        <position position="202"/>
    </location>
</feature>
<feature type="helix" evidence="7">
    <location>
        <begin position="68"/>
        <end position="84"/>
    </location>
</feature>
<feature type="helix" evidence="7">
    <location>
        <begin position="95"/>
        <end position="100"/>
    </location>
</feature>
<feature type="helix" evidence="7">
    <location>
        <begin position="103"/>
        <end position="106"/>
    </location>
</feature>
<reference key="1">
    <citation type="journal article" date="1997" name="Nature">
        <title>The nucleotide sequence of Saccharomyces cerevisiae chromosome XVI.</title>
        <authorList>
            <person name="Bussey H."/>
            <person name="Storms R.K."/>
            <person name="Ahmed A."/>
            <person name="Albermann K."/>
            <person name="Allen E."/>
            <person name="Ansorge W."/>
            <person name="Araujo R."/>
            <person name="Aparicio A."/>
            <person name="Barrell B.G."/>
            <person name="Badcock K."/>
            <person name="Benes V."/>
            <person name="Botstein D."/>
            <person name="Bowman S."/>
            <person name="Brueckner M."/>
            <person name="Carpenter J."/>
            <person name="Cherry J.M."/>
            <person name="Chung E."/>
            <person name="Churcher C.M."/>
            <person name="Coster F."/>
            <person name="Davis K."/>
            <person name="Davis R.W."/>
            <person name="Dietrich F.S."/>
            <person name="Delius H."/>
            <person name="DiPaolo T."/>
            <person name="Dubois E."/>
            <person name="Duesterhoeft A."/>
            <person name="Duncan M."/>
            <person name="Floeth M."/>
            <person name="Fortin N."/>
            <person name="Friesen J.D."/>
            <person name="Fritz C."/>
            <person name="Goffeau A."/>
            <person name="Hall J."/>
            <person name="Hebling U."/>
            <person name="Heumann K."/>
            <person name="Hilbert H."/>
            <person name="Hillier L.W."/>
            <person name="Hunicke-Smith S."/>
            <person name="Hyman R.W."/>
            <person name="Johnston M."/>
            <person name="Kalman S."/>
            <person name="Kleine K."/>
            <person name="Komp C."/>
            <person name="Kurdi O."/>
            <person name="Lashkari D."/>
            <person name="Lew H."/>
            <person name="Lin A."/>
            <person name="Lin D."/>
            <person name="Louis E.J."/>
            <person name="Marathe R."/>
            <person name="Messenguy F."/>
            <person name="Mewes H.-W."/>
            <person name="Mirtipati S."/>
            <person name="Moestl D."/>
            <person name="Mueller-Auer S."/>
            <person name="Namath A."/>
            <person name="Nentwich U."/>
            <person name="Oefner P."/>
            <person name="Pearson D."/>
            <person name="Petel F.X."/>
            <person name="Pohl T.M."/>
            <person name="Purnelle B."/>
            <person name="Rajandream M.A."/>
            <person name="Rechmann S."/>
            <person name="Rieger M."/>
            <person name="Riles L."/>
            <person name="Roberts D."/>
            <person name="Schaefer M."/>
            <person name="Scharfe M."/>
            <person name="Scherens B."/>
            <person name="Schramm S."/>
            <person name="Schroeder M."/>
            <person name="Sdicu A.-M."/>
            <person name="Tettelin H."/>
            <person name="Urrestarazu L.A."/>
            <person name="Ushinsky S."/>
            <person name="Vierendeels F."/>
            <person name="Vissers S."/>
            <person name="Voss H."/>
            <person name="Walsh S.V."/>
            <person name="Wambutt R."/>
            <person name="Wang Y."/>
            <person name="Wedler E."/>
            <person name="Wedler H."/>
            <person name="Winnett E."/>
            <person name="Zhong W.-W."/>
            <person name="Zollner A."/>
            <person name="Vo D.H."/>
            <person name="Hani J."/>
        </authorList>
    </citation>
    <scope>NUCLEOTIDE SEQUENCE [LARGE SCALE GENOMIC DNA]</scope>
    <source>
        <strain>ATCC 204508 / S288c</strain>
    </source>
</reference>
<reference key="2">
    <citation type="journal article" date="2014" name="G3 (Bethesda)">
        <title>The reference genome sequence of Saccharomyces cerevisiae: Then and now.</title>
        <authorList>
            <person name="Engel S.R."/>
            <person name="Dietrich F.S."/>
            <person name="Fisk D.G."/>
            <person name="Binkley G."/>
            <person name="Balakrishnan R."/>
            <person name="Costanzo M.C."/>
            <person name="Dwight S.S."/>
            <person name="Hitz B.C."/>
            <person name="Karra K."/>
            <person name="Nash R.S."/>
            <person name="Weng S."/>
            <person name="Wong E.D."/>
            <person name="Lloyd P."/>
            <person name="Skrzypek M.S."/>
            <person name="Miyasato S.R."/>
            <person name="Simison M."/>
            <person name="Cherry J.M."/>
        </authorList>
    </citation>
    <scope>GENOME REANNOTATION</scope>
    <source>
        <strain>ATCC 204508 / S288c</strain>
    </source>
</reference>
<reference key="3">
    <citation type="journal article" date="2007" name="Genome Res.">
        <title>Approaching a complete repository of sequence-verified protein-encoding clones for Saccharomyces cerevisiae.</title>
        <authorList>
            <person name="Hu Y."/>
            <person name="Rolfs A."/>
            <person name="Bhullar B."/>
            <person name="Murthy T.V.S."/>
            <person name="Zhu C."/>
            <person name="Berger M.F."/>
            <person name="Camargo A.A."/>
            <person name="Kelley F."/>
            <person name="McCarron S."/>
            <person name="Jepson D."/>
            <person name="Richardson A."/>
            <person name="Raphael J."/>
            <person name="Moreira D."/>
            <person name="Taycher E."/>
            <person name="Zuo D."/>
            <person name="Mohr S."/>
            <person name="Kane M.F."/>
            <person name="Williamson J."/>
            <person name="Simpson A.J.G."/>
            <person name="Bulyk M.L."/>
            <person name="Harlow E."/>
            <person name="Marsischky G."/>
            <person name="Kolodner R.D."/>
            <person name="LaBaer J."/>
        </authorList>
    </citation>
    <scope>NUCLEOTIDE SEQUENCE [GENOMIC DNA]</scope>
    <source>
        <strain>ATCC 204508 / S288c</strain>
    </source>
</reference>
<reference key="4">
    <citation type="journal article" date="2003" name="Nature">
        <title>Global analysis of protein expression in yeast.</title>
        <authorList>
            <person name="Ghaemmaghami S."/>
            <person name="Huh W.-K."/>
            <person name="Bower K."/>
            <person name="Howson R.W."/>
            <person name="Belle A."/>
            <person name="Dephoure N."/>
            <person name="O'Shea E.K."/>
            <person name="Weissman J.S."/>
        </authorList>
    </citation>
    <scope>LEVEL OF PROTEIN EXPRESSION [LARGE SCALE ANALYSIS]</scope>
</reference>
<reference key="5">
    <citation type="journal article" date="2006" name="Mol. Cell. Biol.">
        <title>Acm1 is a negative regulator of the CDH1-dependent anaphase-promoting complex/cyclosome in budding yeast.</title>
        <authorList>
            <person name="Martinez J.S."/>
            <person name="Jeong D.-E."/>
            <person name="Choi E."/>
            <person name="Billings B.M."/>
            <person name="Hall M.C."/>
        </authorList>
    </citation>
    <scope>FUNCTION</scope>
    <scope>IDENTIFICATION BY MASS SPECTROMETRY</scope>
    <scope>INDUCTION</scope>
    <scope>INTERACTION WITH CDH1; BMH1 AND BMH2</scope>
</reference>
<reference key="6">
    <citation type="journal article" date="2007" name="Proc. Natl. Acad. Sci. U.S.A.">
        <title>Analysis of phosphorylation sites on proteins from Saccharomyces cerevisiae by electron transfer dissociation (ETD) mass spectrometry.</title>
        <authorList>
            <person name="Chi A."/>
            <person name="Huttenhower C."/>
            <person name="Geer L.Y."/>
            <person name="Coon J.J."/>
            <person name="Syka J.E.P."/>
            <person name="Bai D.L."/>
            <person name="Shabanowitz J."/>
            <person name="Burke D.J."/>
            <person name="Troyanskaya O.G."/>
            <person name="Hunt D.F."/>
        </authorList>
    </citation>
    <scope>PHOSPHORYLATION [LARGE SCALE ANALYSIS] AT SER-48; THR-161 AND SER-202</scope>
    <scope>IDENTIFICATION BY MASS SPECTROMETRY [LARGE SCALE ANALYSIS]</scope>
</reference>
<reference key="7">
    <citation type="journal article" date="2008" name="Mol. Cell. Proteomics">
        <title>A multidimensional chromatography technology for in-depth phosphoproteome analysis.</title>
        <authorList>
            <person name="Albuquerque C.P."/>
            <person name="Smolka M.B."/>
            <person name="Payne S.H."/>
            <person name="Bafna V."/>
            <person name="Eng J."/>
            <person name="Zhou H."/>
        </authorList>
    </citation>
    <scope>PHOSPHORYLATION [LARGE SCALE ANALYSIS] AT THR-161 AND SER-202</scope>
    <scope>IDENTIFICATION BY MASS SPECTROMETRY [LARGE SCALE ANALYSIS]</scope>
</reference>
<reference key="8">
    <citation type="journal article" date="2009" name="Science">
        <title>Global analysis of Cdk1 substrate phosphorylation sites provides insights into evolution.</title>
        <authorList>
            <person name="Holt L.J."/>
            <person name="Tuch B.B."/>
            <person name="Villen J."/>
            <person name="Johnson A.D."/>
            <person name="Gygi S.P."/>
            <person name="Morgan D.O."/>
        </authorList>
    </citation>
    <scope>PHOSPHORYLATION [LARGE SCALE ANALYSIS] AT SER-202</scope>
    <scope>IDENTIFICATION BY MASS SPECTROMETRY [LARGE SCALE ANALYSIS]</scope>
</reference>
<name>ACM1_YEAST</name>
<accession>Q08981</accession>
<accession>D6W3A3</accession>